<protein>
    <recommendedName>
        <fullName evidence="1">Ribose-5-phosphate isomerase A</fullName>
        <ecNumber evidence="1">5.3.1.6</ecNumber>
    </recommendedName>
    <alternativeName>
        <fullName evidence="1">Phosphoriboisomerase A</fullName>
        <shortName evidence="1">PRI</shortName>
    </alternativeName>
</protein>
<keyword id="KW-0413">Isomerase</keyword>
<sequence length="219" mass="22895">MTQDELKKAVGWAALQYVQPGTIVGVGTGSTAAHFIDALGTMKGQIEGAVSSSDASTEKLKGLGIHVFDLNEVDSLGIYVDGADEINGHMQMIKGGGAALTREKIIASVAEKFICIADASKQVDILGKFPLPVEVIPMARSAVARQLVKLGGRPEYRQNVVTDNGNVILDVYGMEILDPIALENAINAIPGVVTVGLFANRGADVALIGTPDGVKTIVK</sequence>
<feature type="chain" id="PRO_0000158457" description="Ribose-5-phosphate isomerase A">
    <location>
        <begin position="1"/>
        <end position="219"/>
    </location>
</feature>
<feature type="active site" description="Proton acceptor" evidence="1">
    <location>
        <position position="103"/>
    </location>
</feature>
<feature type="binding site" evidence="1">
    <location>
        <begin position="28"/>
        <end position="31"/>
    </location>
    <ligand>
        <name>substrate</name>
    </ligand>
</feature>
<feature type="binding site" evidence="1">
    <location>
        <begin position="81"/>
        <end position="84"/>
    </location>
    <ligand>
        <name>substrate</name>
    </ligand>
</feature>
<feature type="binding site" evidence="1">
    <location>
        <begin position="94"/>
        <end position="97"/>
    </location>
    <ligand>
        <name>substrate</name>
    </ligand>
</feature>
<feature type="binding site" evidence="1">
    <location>
        <position position="121"/>
    </location>
    <ligand>
        <name>substrate</name>
    </ligand>
</feature>
<accession>Q5PJH1</accession>
<dbReference type="EC" id="5.3.1.6" evidence="1"/>
<dbReference type="EMBL" id="CP000026">
    <property type="protein sequence ID" value="AAV78772.1"/>
    <property type="molecule type" value="Genomic_DNA"/>
</dbReference>
<dbReference type="RefSeq" id="WP_000189741.1">
    <property type="nucleotide sequence ID" value="NC_006511.1"/>
</dbReference>
<dbReference type="SMR" id="Q5PJH1"/>
<dbReference type="KEGG" id="spt:SPA2934"/>
<dbReference type="HOGENOM" id="CLU_056590_1_1_6"/>
<dbReference type="UniPathway" id="UPA00115">
    <property type="reaction ID" value="UER00412"/>
</dbReference>
<dbReference type="Proteomes" id="UP000008185">
    <property type="component" value="Chromosome"/>
</dbReference>
<dbReference type="GO" id="GO:0005829">
    <property type="term" value="C:cytosol"/>
    <property type="evidence" value="ECO:0007669"/>
    <property type="project" value="TreeGrafter"/>
</dbReference>
<dbReference type="GO" id="GO:0004751">
    <property type="term" value="F:ribose-5-phosphate isomerase activity"/>
    <property type="evidence" value="ECO:0007669"/>
    <property type="project" value="UniProtKB-UniRule"/>
</dbReference>
<dbReference type="GO" id="GO:0006014">
    <property type="term" value="P:D-ribose metabolic process"/>
    <property type="evidence" value="ECO:0007669"/>
    <property type="project" value="TreeGrafter"/>
</dbReference>
<dbReference type="GO" id="GO:0009052">
    <property type="term" value="P:pentose-phosphate shunt, non-oxidative branch"/>
    <property type="evidence" value="ECO:0007669"/>
    <property type="project" value="UniProtKB-UniRule"/>
</dbReference>
<dbReference type="CDD" id="cd01398">
    <property type="entry name" value="RPI_A"/>
    <property type="match status" value="1"/>
</dbReference>
<dbReference type="FunFam" id="3.30.70.260:FF:000004">
    <property type="entry name" value="Ribose-5-phosphate isomerase A"/>
    <property type="match status" value="1"/>
</dbReference>
<dbReference type="FunFam" id="3.40.50.1360:FF:000001">
    <property type="entry name" value="Ribose-5-phosphate isomerase A"/>
    <property type="match status" value="1"/>
</dbReference>
<dbReference type="Gene3D" id="3.30.70.260">
    <property type="match status" value="1"/>
</dbReference>
<dbReference type="Gene3D" id="3.40.50.1360">
    <property type="match status" value="1"/>
</dbReference>
<dbReference type="HAMAP" id="MF_00170">
    <property type="entry name" value="Rib_5P_isom_A"/>
    <property type="match status" value="1"/>
</dbReference>
<dbReference type="InterPro" id="IPR037171">
    <property type="entry name" value="NagB/RpiA_transferase-like"/>
</dbReference>
<dbReference type="InterPro" id="IPR020672">
    <property type="entry name" value="Ribose5P_isomerase_typA_subgr"/>
</dbReference>
<dbReference type="InterPro" id="IPR004788">
    <property type="entry name" value="Ribose5P_isomerase_type_A"/>
</dbReference>
<dbReference type="NCBIfam" id="NF001924">
    <property type="entry name" value="PRK00702.1"/>
    <property type="match status" value="1"/>
</dbReference>
<dbReference type="NCBIfam" id="TIGR00021">
    <property type="entry name" value="rpiA"/>
    <property type="match status" value="1"/>
</dbReference>
<dbReference type="PANTHER" id="PTHR11934">
    <property type="entry name" value="RIBOSE-5-PHOSPHATE ISOMERASE"/>
    <property type="match status" value="1"/>
</dbReference>
<dbReference type="PANTHER" id="PTHR11934:SF0">
    <property type="entry name" value="RIBOSE-5-PHOSPHATE ISOMERASE"/>
    <property type="match status" value="1"/>
</dbReference>
<dbReference type="Pfam" id="PF06026">
    <property type="entry name" value="Rib_5-P_isom_A"/>
    <property type="match status" value="1"/>
</dbReference>
<dbReference type="SUPFAM" id="SSF75445">
    <property type="entry name" value="D-ribose-5-phosphate isomerase (RpiA), lid domain"/>
    <property type="match status" value="1"/>
</dbReference>
<dbReference type="SUPFAM" id="SSF100950">
    <property type="entry name" value="NagB/RpiA/CoA transferase-like"/>
    <property type="match status" value="1"/>
</dbReference>
<proteinExistence type="inferred from homology"/>
<evidence type="ECO:0000255" key="1">
    <source>
        <dbReference type="HAMAP-Rule" id="MF_00170"/>
    </source>
</evidence>
<comment type="function">
    <text evidence="1">Catalyzes the reversible conversion of ribose-5-phosphate to ribulose 5-phosphate.</text>
</comment>
<comment type="catalytic activity">
    <reaction evidence="1">
        <text>aldehydo-D-ribose 5-phosphate = D-ribulose 5-phosphate</text>
        <dbReference type="Rhea" id="RHEA:14657"/>
        <dbReference type="ChEBI" id="CHEBI:58121"/>
        <dbReference type="ChEBI" id="CHEBI:58273"/>
        <dbReference type="EC" id="5.3.1.6"/>
    </reaction>
</comment>
<comment type="pathway">
    <text evidence="1">Carbohydrate degradation; pentose phosphate pathway; D-ribose 5-phosphate from D-ribulose 5-phosphate (non-oxidative stage): step 1/1.</text>
</comment>
<comment type="subunit">
    <text evidence="1">Homodimer.</text>
</comment>
<comment type="similarity">
    <text evidence="1">Belongs to the ribose 5-phosphate isomerase family.</text>
</comment>
<name>RPIA_SALPA</name>
<reference key="1">
    <citation type="journal article" date="2004" name="Nat. Genet.">
        <title>Comparison of genome degradation in Paratyphi A and Typhi, human-restricted serovars of Salmonella enterica that cause typhoid.</title>
        <authorList>
            <person name="McClelland M."/>
            <person name="Sanderson K.E."/>
            <person name="Clifton S.W."/>
            <person name="Latreille P."/>
            <person name="Porwollik S."/>
            <person name="Sabo A."/>
            <person name="Meyer R."/>
            <person name="Bieri T."/>
            <person name="Ozersky P."/>
            <person name="McLellan M."/>
            <person name="Harkins C.R."/>
            <person name="Wang C."/>
            <person name="Nguyen C."/>
            <person name="Berghoff A."/>
            <person name="Elliott G."/>
            <person name="Kohlberg S."/>
            <person name="Strong C."/>
            <person name="Du F."/>
            <person name="Carter J."/>
            <person name="Kremizki C."/>
            <person name="Layman D."/>
            <person name="Leonard S."/>
            <person name="Sun H."/>
            <person name="Fulton L."/>
            <person name="Nash W."/>
            <person name="Miner T."/>
            <person name="Minx P."/>
            <person name="Delehaunty K."/>
            <person name="Fronick C."/>
            <person name="Magrini V."/>
            <person name="Nhan M."/>
            <person name="Warren W."/>
            <person name="Florea L."/>
            <person name="Spieth J."/>
            <person name="Wilson R.K."/>
        </authorList>
    </citation>
    <scope>NUCLEOTIDE SEQUENCE [LARGE SCALE GENOMIC DNA]</scope>
    <source>
        <strain>ATCC 9150 / SARB42</strain>
    </source>
</reference>
<gene>
    <name evidence="1" type="primary">rpiA</name>
    <name type="ordered locus">SPA2934</name>
</gene>
<organism>
    <name type="scientific">Salmonella paratyphi A (strain ATCC 9150 / SARB42)</name>
    <dbReference type="NCBI Taxonomy" id="295319"/>
    <lineage>
        <taxon>Bacteria</taxon>
        <taxon>Pseudomonadati</taxon>
        <taxon>Pseudomonadota</taxon>
        <taxon>Gammaproteobacteria</taxon>
        <taxon>Enterobacterales</taxon>
        <taxon>Enterobacteriaceae</taxon>
        <taxon>Salmonella</taxon>
    </lineage>
</organism>